<comment type="subunit">
    <text evidence="1">Part of the 30S ribosomal subunit.</text>
</comment>
<comment type="subcellular location">
    <subcellularLocation>
        <location>Plastid</location>
        <location>Chloroplast</location>
    </subcellularLocation>
</comment>
<comment type="similarity">
    <text evidence="1">Belongs to the universal ribosomal protein uS11 family.</text>
</comment>
<keyword id="KW-0150">Chloroplast</keyword>
<keyword id="KW-0934">Plastid</keyword>
<keyword id="KW-0687">Ribonucleoprotein</keyword>
<keyword id="KW-0689">Ribosomal protein</keyword>
<keyword id="KW-0694">RNA-binding</keyword>
<keyword id="KW-0699">rRNA-binding</keyword>
<organism>
    <name type="scientific">Nicotiana tomentosiformis</name>
    <name type="common">Tobacco</name>
    <dbReference type="NCBI Taxonomy" id="4098"/>
    <lineage>
        <taxon>Eukaryota</taxon>
        <taxon>Viridiplantae</taxon>
        <taxon>Streptophyta</taxon>
        <taxon>Embryophyta</taxon>
        <taxon>Tracheophyta</taxon>
        <taxon>Spermatophyta</taxon>
        <taxon>Magnoliopsida</taxon>
        <taxon>eudicotyledons</taxon>
        <taxon>Gunneridae</taxon>
        <taxon>Pentapetalae</taxon>
        <taxon>asterids</taxon>
        <taxon>lamiids</taxon>
        <taxon>Solanales</taxon>
        <taxon>Solanaceae</taxon>
        <taxon>Nicotianoideae</taxon>
        <taxon>Nicotianeae</taxon>
        <taxon>Nicotiana</taxon>
    </lineage>
</organism>
<feature type="chain" id="PRO_0000230454" description="Small ribosomal subunit protein uS11c">
    <location>
        <begin position="1"/>
        <end position="138"/>
    </location>
</feature>
<feature type="region of interest" description="Disordered" evidence="2">
    <location>
        <begin position="1"/>
        <end position="22"/>
    </location>
</feature>
<feature type="compositionally biased region" description="Basic residues" evidence="2">
    <location>
        <begin position="9"/>
        <end position="22"/>
    </location>
</feature>
<proteinExistence type="inferred from homology"/>
<geneLocation type="chloroplast"/>
<dbReference type="EMBL" id="AB240139">
    <property type="protein sequence ID" value="BAE48036.1"/>
    <property type="molecule type" value="Genomic_DNA"/>
</dbReference>
<dbReference type="RefSeq" id="YP_398897.1">
    <property type="nucleotide sequence ID" value="NC_007602.1"/>
</dbReference>
<dbReference type="SMR" id="Q33BZ9"/>
<dbReference type="GeneID" id="3776381"/>
<dbReference type="KEGG" id="nto:3776381"/>
<dbReference type="OrthoDB" id="1286874at2759"/>
<dbReference type="GO" id="GO:0009507">
    <property type="term" value="C:chloroplast"/>
    <property type="evidence" value="ECO:0007669"/>
    <property type="project" value="UniProtKB-SubCell"/>
</dbReference>
<dbReference type="GO" id="GO:1990904">
    <property type="term" value="C:ribonucleoprotein complex"/>
    <property type="evidence" value="ECO:0007669"/>
    <property type="project" value="UniProtKB-KW"/>
</dbReference>
<dbReference type="GO" id="GO:0005840">
    <property type="term" value="C:ribosome"/>
    <property type="evidence" value="ECO:0007669"/>
    <property type="project" value="UniProtKB-KW"/>
</dbReference>
<dbReference type="GO" id="GO:0019843">
    <property type="term" value="F:rRNA binding"/>
    <property type="evidence" value="ECO:0007669"/>
    <property type="project" value="UniProtKB-UniRule"/>
</dbReference>
<dbReference type="GO" id="GO:0003735">
    <property type="term" value="F:structural constituent of ribosome"/>
    <property type="evidence" value="ECO:0007669"/>
    <property type="project" value="InterPro"/>
</dbReference>
<dbReference type="GO" id="GO:0006412">
    <property type="term" value="P:translation"/>
    <property type="evidence" value="ECO:0007669"/>
    <property type="project" value="UniProtKB-UniRule"/>
</dbReference>
<dbReference type="FunFam" id="3.30.420.80:FF:000003">
    <property type="entry name" value="30S ribosomal protein S11, chloroplastic"/>
    <property type="match status" value="1"/>
</dbReference>
<dbReference type="Gene3D" id="3.30.420.80">
    <property type="entry name" value="Ribosomal protein S11"/>
    <property type="match status" value="1"/>
</dbReference>
<dbReference type="HAMAP" id="MF_01310">
    <property type="entry name" value="Ribosomal_uS11"/>
    <property type="match status" value="1"/>
</dbReference>
<dbReference type="InterPro" id="IPR001971">
    <property type="entry name" value="Ribosomal_uS11"/>
</dbReference>
<dbReference type="InterPro" id="IPR019981">
    <property type="entry name" value="Ribosomal_uS11_bac-type"/>
</dbReference>
<dbReference type="InterPro" id="IPR018102">
    <property type="entry name" value="Ribosomal_uS11_CS"/>
</dbReference>
<dbReference type="InterPro" id="IPR036967">
    <property type="entry name" value="Ribosomal_uS11_sf"/>
</dbReference>
<dbReference type="NCBIfam" id="NF003698">
    <property type="entry name" value="PRK05309.1"/>
    <property type="match status" value="1"/>
</dbReference>
<dbReference type="NCBIfam" id="TIGR03632">
    <property type="entry name" value="uS11_bact"/>
    <property type="match status" value="1"/>
</dbReference>
<dbReference type="PANTHER" id="PTHR11759">
    <property type="entry name" value="40S RIBOSOMAL PROTEIN S14/30S RIBOSOMAL PROTEIN S11"/>
    <property type="match status" value="1"/>
</dbReference>
<dbReference type="Pfam" id="PF00411">
    <property type="entry name" value="Ribosomal_S11"/>
    <property type="match status" value="1"/>
</dbReference>
<dbReference type="PIRSF" id="PIRSF002131">
    <property type="entry name" value="Ribosomal_S11"/>
    <property type="match status" value="1"/>
</dbReference>
<dbReference type="SUPFAM" id="SSF53137">
    <property type="entry name" value="Translational machinery components"/>
    <property type="match status" value="1"/>
</dbReference>
<dbReference type="PROSITE" id="PS00054">
    <property type="entry name" value="RIBOSOMAL_S11"/>
    <property type="match status" value="1"/>
</dbReference>
<protein>
    <recommendedName>
        <fullName evidence="1">Small ribosomal subunit protein uS11c</fullName>
    </recommendedName>
    <alternativeName>
        <fullName evidence="3">30S ribosomal protein S11, chloroplastic</fullName>
    </alternativeName>
</protein>
<evidence type="ECO:0000255" key="1">
    <source>
        <dbReference type="HAMAP-Rule" id="MF_01310"/>
    </source>
</evidence>
<evidence type="ECO:0000256" key="2">
    <source>
        <dbReference type="SAM" id="MobiDB-lite"/>
    </source>
</evidence>
<evidence type="ECO:0000305" key="3"/>
<accession>Q33BZ9</accession>
<name>RR11_NICTO</name>
<gene>
    <name evidence="1" type="primary">rps11</name>
</gene>
<reference key="1">
    <citation type="journal article" date="2006" name="Mol. Genet. Genomics">
        <title>The chloroplast genome of Nicotiana sylvestris and Nicotiana tomentosiformis: complete sequencing confirms that the Nicotiana sylvestris progenitor is the maternal genome donor of Nicotiana tabacum.</title>
        <authorList>
            <person name="Yukawa M."/>
            <person name="Tsudzuki T."/>
            <person name="Sugiura M."/>
        </authorList>
    </citation>
    <scope>NUCLEOTIDE SEQUENCE [LARGE SCALE GENOMIC DNA]</scope>
</reference>
<sequence>MAKAIPKISSRRNGRIGSRKGARRIPKGVIHVQASFNNTIVTVTDVRGRVVSWSSAGTSGFKGTRRGTPFAAQTAVANAIRTVVDQGMQRAEVMIKGPGLGRDAALRAIRRSGILLTFVRDVTPMPHNGCRPPKKRRV</sequence>